<name>SAM10_HUMAN</name>
<accession>Q9BYL1</accession>
<organism>
    <name type="scientific">Homo sapiens</name>
    <name type="common">Human</name>
    <dbReference type="NCBI Taxonomy" id="9606"/>
    <lineage>
        <taxon>Eukaryota</taxon>
        <taxon>Metazoa</taxon>
        <taxon>Chordata</taxon>
        <taxon>Craniata</taxon>
        <taxon>Vertebrata</taxon>
        <taxon>Euteleostomi</taxon>
        <taxon>Mammalia</taxon>
        <taxon>Eutheria</taxon>
        <taxon>Euarchontoglires</taxon>
        <taxon>Primates</taxon>
        <taxon>Haplorrhini</taxon>
        <taxon>Catarrhini</taxon>
        <taxon>Hominidae</taxon>
        <taxon>Homo</taxon>
    </lineage>
</organism>
<reference key="1">
    <citation type="journal article" date="2001" name="Nature">
        <title>The DNA sequence and comparative analysis of human chromosome 20.</title>
        <authorList>
            <person name="Deloukas P."/>
            <person name="Matthews L.H."/>
            <person name="Ashurst J.L."/>
            <person name="Burton J."/>
            <person name="Gilbert J.G.R."/>
            <person name="Jones M."/>
            <person name="Stavrides G."/>
            <person name="Almeida J.P."/>
            <person name="Babbage A.K."/>
            <person name="Bagguley C.L."/>
            <person name="Bailey J."/>
            <person name="Barlow K.F."/>
            <person name="Bates K.N."/>
            <person name="Beard L.M."/>
            <person name="Beare D.M."/>
            <person name="Beasley O.P."/>
            <person name="Bird C.P."/>
            <person name="Blakey S.E."/>
            <person name="Bridgeman A.M."/>
            <person name="Brown A.J."/>
            <person name="Buck D."/>
            <person name="Burrill W.D."/>
            <person name="Butler A.P."/>
            <person name="Carder C."/>
            <person name="Carter N.P."/>
            <person name="Chapman J.C."/>
            <person name="Clamp M."/>
            <person name="Clark G."/>
            <person name="Clark L.N."/>
            <person name="Clark S.Y."/>
            <person name="Clee C.M."/>
            <person name="Clegg S."/>
            <person name="Cobley V.E."/>
            <person name="Collier R.E."/>
            <person name="Connor R.E."/>
            <person name="Corby N.R."/>
            <person name="Coulson A."/>
            <person name="Coville G.J."/>
            <person name="Deadman R."/>
            <person name="Dhami P.D."/>
            <person name="Dunn M."/>
            <person name="Ellington A.G."/>
            <person name="Frankland J.A."/>
            <person name="Fraser A."/>
            <person name="French L."/>
            <person name="Garner P."/>
            <person name="Grafham D.V."/>
            <person name="Griffiths C."/>
            <person name="Griffiths M.N.D."/>
            <person name="Gwilliam R."/>
            <person name="Hall R.E."/>
            <person name="Hammond S."/>
            <person name="Harley J.L."/>
            <person name="Heath P.D."/>
            <person name="Ho S."/>
            <person name="Holden J.L."/>
            <person name="Howden P.J."/>
            <person name="Huckle E."/>
            <person name="Hunt A.R."/>
            <person name="Hunt S.E."/>
            <person name="Jekosch K."/>
            <person name="Johnson C.M."/>
            <person name="Johnson D."/>
            <person name="Kay M.P."/>
            <person name="Kimberley A.M."/>
            <person name="King A."/>
            <person name="Knights A."/>
            <person name="Laird G.K."/>
            <person name="Lawlor S."/>
            <person name="Lehvaeslaiho M.H."/>
            <person name="Leversha M.A."/>
            <person name="Lloyd C."/>
            <person name="Lloyd D.M."/>
            <person name="Lovell J.D."/>
            <person name="Marsh V.L."/>
            <person name="Martin S.L."/>
            <person name="McConnachie L.J."/>
            <person name="McLay K."/>
            <person name="McMurray A.A."/>
            <person name="Milne S.A."/>
            <person name="Mistry D."/>
            <person name="Moore M.J.F."/>
            <person name="Mullikin J.C."/>
            <person name="Nickerson T."/>
            <person name="Oliver K."/>
            <person name="Parker A."/>
            <person name="Patel R."/>
            <person name="Pearce T.A.V."/>
            <person name="Peck A.I."/>
            <person name="Phillimore B.J.C.T."/>
            <person name="Prathalingam S.R."/>
            <person name="Plumb R.W."/>
            <person name="Ramsay H."/>
            <person name="Rice C.M."/>
            <person name="Ross M.T."/>
            <person name="Scott C.E."/>
            <person name="Sehra H.K."/>
            <person name="Shownkeen R."/>
            <person name="Sims S."/>
            <person name="Skuce C.D."/>
            <person name="Smith M.L."/>
            <person name="Soderlund C."/>
            <person name="Steward C.A."/>
            <person name="Sulston J.E."/>
            <person name="Swann R.M."/>
            <person name="Sycamore N."/>
            <person name="Taylor R."/>
            <person name="Tee L."/>
            <person name="Thomas D.W."/>
            <person name="Thorpe A."/>
            <person name="Tracey A."/>
            <person name="Tromans A.C."/>
            <person name="Vaudin M."/>
            <person name="Wall M."/>
            <person name="Wallis J.M."/>
            <person name="Whitehead S.L."/>
            <person name="Whittaker P."/>
            <person name="Willey D.L."/>
            <person name="Williams L."/>
            <person name="Williams S.A."/>
            <person name="Wilming L."/>
            <person name="Wray P.W."/>
            <person name="Hubbard T."/>
            <person name="Durbin R.M."/>
            <person name="Bentley D.R."/>
            <person name="Beck S."/>
            <person name="Rogers J."/>
        </authorList>
    </citation>
    <scope>NUCLEOTIDE SEQUENCE [LARGE SCALE GENOMIC DNA]</scope>
</reference>
<reference key="2">
    <citation type="journal article" date="2004" name="Genome Res.">
        <title>The status, quality, and expansion of the NIH full-length cDNA project: the Mammalian Gene Collection (MGC).</title>
        <authorList>
            <consortium name="The MGC Project Team"/>
        </authorList>
    </citation>
    <scope>NUCLEOTIDE SEQUENCE [LARGE SCALE MRNA]</scope>
    <source>
        <tissue>Ovary</tissue>
    </source>
</reference>
<gene>
    <name type="primary">SAMD10</name>
    <name type="synonym">C20orf136</name>
</gene>
<evidence type="ECO:0000255" key="1">
    <source>
        <dbReference type="PROSITE-ProRule" id="PRU00184"/>
    </source>
</evidence>
<sequence length="202" mass="22770">MFTELRSKLSPPRGRAGAVRAGFGERRDVDATAHFSFCRTLLEHTVSAESIPCHLPRTPGTSLTWHDSRSQRAASSRPIKLLQQPGTDTPQGRLYSDHYGLYHTSPSLGGLTRPVVLWSQQDVCKWLKKHCPHNYLVYVEAFSQHAITGRALLRLNAEKLQRMGLAQEAQRQEVLQQVLRLQVREEGRSLQLLSQASFGKMS</sequence>
<proteinExistence type="evidence at protein level"/>
<feature type="chain" id="PRO_0000097568" description="Sterile alpha motif domain-containing protein 10">
    <location>
        <begin position="1"/>
        <end position="202"/>
    </location>
</feature>
<feature type="domain" description="SAM" evidence="1">
    <location>
        <begin position="118"/>
        <end position="184"/>
    </location>
</feature>
<dbReference type="EMBL" id="AL118506">
    <property type="status" value="NOT_ANNOTATED_CDS"/>
    <property type="molecule type" value="Genomic_DNA"/>
</dbReference>
<dbReference type="EMBL" id="BC067362">
    <property type="protein sequence ID" value="AAH67362.1"/>
    <property type="molecule type" value="mRNA"/>
</dbReference>
<dbReference type="CCDS" id="CCDS13549.1"/>
<dbReference type="RefSeq" id="NP_542188.1">
    <property type="nucleotide sequence ID" value="NM_080621.5"/>
</dbReference>
<dbReference type="RefSeq" id="XP_016883160.1">
    <property type="nucleotide sequence ID" value="XM_017027671.1"/>
</dbReference>
<dbReference type="RefSeq" id="XP_054178982.1">
    <property type="nucleotide sequence ID" value="XM_054323007.1"/>
</dbReference>
<dbReference type="SMR" id="Q9BYL1"/>
<dbReference type="BioGRID" id="126661">
    <property type="interactions" value="11"/>
</dbReference>
<dbReference type="FunCoup" id="Q9BYL1">
    <property type="interactions" value="77"/>
</dbReference>
<dbReference type="IntAct" id="Q9BYL1">
    <property type="interactions" value="1"/>
</dbReference>
<dbReference type="STRING" id="9606.ENSP00000358902"/>
<dbReference type="iPTMnet" id="Q9BYL1"/>
<dbReference type="PhosphoSitePlus" id="Q9BYL1"/>
<dbReference type="BioMuta" id="SAMD10"/>
<dbReference type="DMDM" id="26392486"/>
<dbReference type="MassIVE" id="Q9BYL1"/>
<dbReference type="PaxDb" id="9606-ENSP00000358902"/>
<dbReference type="PeptideAtlas" id="Q9BYL1"/>
<dbReference type="ProteomicsDB" id="79666"/>
<dbReference type="Antibodypedia" id="48062">
    <property type="antibodies" value="24 antibodies from 12 providers"/>
</dbReference>
<dbReference type="DNASU" id="140700"/>
<dbReference type="Ensembl" id="ENST00000369886.8">
    <property type="protein sequence ID" value="ENSP00000358902.3"/>
    <property type="gene ID" value="ENSG00000130590.14"/>
</dbReference>
<dbReference type="GeneID" id="140700"/>
<dbReference type="KEGG" id="hsa:140700"/>
<dbReference type="MANE-Select" id="ENST00000369886.8">
    <property type="protein sequence ID" value="ENSP00000358902.3"/>
    <property type="RefSeq nucleotide sequence ID" value="NM_080621.5"/>
    <property type="RefSeq protein sequence ID" value="NP_542188.1"/>
</dbReference>
<dbReference type="UCSC" id="uc002yhm.2">
    <property type="organism name" value="human"/>
</dbReference>
<dbReference type="AGR" id="HGNC:16129"/>
<dbReference type="CTD" id="140700"/>
<dbReference type="GeneCards" id="SAMD10"/>
<dbReference type="HGNC" id="HGNC:16129">
    <property type="gene designation" value="SAMD10"/>
</dbReference>
<dbReference type="HPA" id="ENSG00000130590">
    <property type="expression patterns" value="Tissue enhanced (brain)"/>
</dbReference>
<dbReference type="neXtProt" id="NX_Q9BYL1"/>
<dbReference type="OpenTargets" id="ENSG00000130590"/>
<dbReference type="PharmGKB" id="PA25678"/>
<dbReference type="VEuPathDB" id="HostDB:ENSG00000130590"/>
<dbReference type="eggNOG" id="ENOG502QWNA">
    <property type="taxonomic scope" value="Eukaryota"/>
</dbReference>
<dbReference type="GeneTree" id="ENSGT00390000008161"/>
<dbReference type="HOGENOM" id="CLU_105476_1_0_1"/>
<dbReference type="InParanoid" id="Q9BYL1"/>
<dbReference type="OMA" id="HCGLYHT"/>
<dbReference type="OrthoDB" id="434324at2759"/>
<dbReference type="PAN-GO" id="Q9BYL1">
    <property type="GO annotations" value="2 GO annotations based on evolutionary models"/>
</dbReference>
<dbReference type="PhylomeDB" id="Q9BYL1"/>
<dbReference type="TreeFam" id="TF325918"/>
<dbReference type="PathwayCommons" id="Q9BYL1"/>
<dbReference type="SignaLink" id="Q9BYL1"/>
<dbReference type="BioGRID-ORCS" id="140700">
    <property type="hits" value="22 hits in 1156 CRISPR screens"/>
</dbReference>
<dbReference type="ChiTaRS" id="SAMD10">
    <property type="organism name" value="human"/>
</dbReference>
<dbReference type="GenomeRNAi" id="140700"/>
<dbReference type="Pharos" id="Q9BYL1">
    <property type="development level" value="Tdark"/>
</dbReference>
<dbReference type="PRO" id="PR:Q9BYL1"/>
<dbReference type="Proteomes" id="UP000005640">
    <property type="component" value="Chromosome 20"/>
</dbReference>
<dbReference type="RNAct" id="Q9BYL1">
    <property type="molecule type" value="protein"/>
</dbReference>
<dbReference type="Bgee" id="ENSG00000130590">
    <property type="expression patterns" value="Expressed in right hemisphere of cerebellum and 115 other cell types or tissues"/>
</dbReference>
<dbReference type="ExpressionAtlas" id="Q9BYL1">
    <property type="expression patterns" value="baseline and differential"/>
</dbReference>
<dbReference type="GO" id="GO:0009898">
    <property type="term" value="C:cytoplasmic side of plasma membrane"/>
    <property type="evidence" value="ECO:0000318"/>
    <property type="project" value="GO_Central"/>
</dbReference>
<dbReference type="GO" id="GO:0007169">
    <property type="term" value="P:cell surface receptor protein tyrosine kinase signaling pathway"/>
    <property type="evidence" value="ECO:0000318"/>
    <property type="project" value="GO_Central"/>
</dbReference>
<dbReference type="CDD" id="cd09510">
    <property type="entry name" value="SAM_aveugle-like"/>
    <property type="match status" value="1"/>
</dbReference>
<dbReference type="Gene3D" id="1.10.150.50">
    <property type="entry name" value="Transcription Factor, Ets-1"/>
    <property type="match status" value="1"/>
</dbReference>
<dbReference type="InterPro" id="IPR039144">
    <property type="entry name" value="Aveugle-like_SAM_dom"/>
</dbReference>
<dbReference type="InterPro" id="IPR001660">
    <property type="entry name" value="SAM"/>
</dbReference>
<dbReference type="InterPro" id="IPR013761">
    <property type="entry name" value="SAM/pointed_sf"/>
</dbReference>
<dbReference type="InterPro" id="IPR052268">
    <property type="entry name" value="SAM_domain-containing_protein"/>
</dbReference>
<dbReference type="PANTHER" id="PTHR20843">
    <property type="entry name" value="STERILE ALPHA MOTIF DOMAIN CONTAINING PROTEIN 10"/>
    <property type="match status" value="1"/>
</dbReference>
<dbReference type="PANTHER" id="PTHR20843:SF1">
    <property type="entry name" value="STERILE ALPHA MOTIF DOMAIN-CONTAINING PROTEIN 10"/>
    <property type="match status" value="1"/>
</dbReference>
<dbReference type="Pfam" id="PF07647">
    <property type="entry name" value="SAM_2"/>
    <property type="match status" value="1"/>
</dbReference>
<dbReference type="SMART" id="SM00454">
    <property type="entry name" value="SAM"/>
    <property type="match status" value="1"/>
</dbReference>
<dbReference type="SUPFAM" id="SSF47769">
    <property type="entry name" value="SAM/Pointed domain"/>
    <property type="match status" value="1"/>
</dbReference>
<dbReference type="PROSITE" id="PS50105">
    <property type="entry name" value="SAM_DOMAIN"/>
    <property type="match status" value="1"/>
</dbReference>
<protein>
    <recommendedName>
        <fullName>Sterile alpha motif domain-containing protein 10</fullName>
        <shortName>SAM domain-containing protein 10</shortName>
    </recommendedName>
</protein>
<keyword id="KW-1267">Proteomics identification</keyword>
<keyword id="KW-1185">Reference proteome</keyword>